<accession>B4U931</accession>
<protein>
    <recommendedName>
        <fullName evidence="1">Large ribosomal subunit protein bL25</fullName>
    </recommendedName>
    <alternativeName>
        <fullName evidence="2">50S ribosomal protein L25</fullName>
    </alternativeName>
    <alternativeName>
        <fullName evidence="1">General stress protein CTC</fullName>
    </alternativeName>
</protein>
<proteinExistence type="inferred from homology"/>
<gene>
    <name evidence="1" type="primary">rplY</name>
    <name evidence="1" type="synonym">ctc</name>
    <name type="ordered locus">HY04AAS1_0955</name>
</gene>
<reference key="1">
    <citation type="journal article" date="2009" name="J. Bacteriol.">
        <title>Complete and draft genome sequences of six members of the Aquificales.</title>
        <authorList>
            <person name="Reysenbach A.-L."/>
            <person name="Hamamura N."/>
            <person name="Podar M."/>
            <person name="Griffiths E."/>
            <person name="Ferreira S."/>
            <person name="Hochstein R."/>
            <person name="Heidelberg J."/>
            <person name="Johnson J."/>
            <person name="Mead D."/>
            <person name="Pohorille A."/>
            <person name="Sarmiento M."/>
            <person name="Schweighofer K."/>
            <person name="Seshadri R."/>
            <person name="Voytek M.A."/>
        </authorList>
    </citation>
    <scope>NUCLEOTIDE SEQUENCE [LARGE SCALE GENOMIC DNA]</scope>
    <source>
        <strain>Y04AAS1</strain>
    </source>
</reference>
<organism>
    <name type="scientific">Hydrogenobaculum sp. (strain Y04AAS1)</name>
    <dbReference type="NCBI Taxonomy" id="380749"/>
    <lineage>
        <taxon>Bacteria</taxon>
        <taxon>Pseudomonadati</taxon>
        <taxon>Aquificota</taxon>
        <taxon>Aquificia</taxon>
        <taxon>Aquificales</taxon>
        <taxon>Aquificaceae</taxon>
        <taxon>Hydrogenobaculum</taxon>
    </lineage>
</organism>
<dbReference type="EMBL" id="CP001130">
    <property type="protein sequence ID" value="ACG57642.1"/>
    <property type="molecule type" value="Genomic_DNA"/>
</dbReference>
<dbReference type="RefSeq" id="WP_012513998.1">
    <property type="nucleotide sequence ID" value="NC_011126.1"/>
</dbReference>
<dbReference type="SMR" id="B4U931"/>
<dbReference type="STRING" id="380749.HY04AAS1_0955"/>
<dbReference type="KEGG" id="hya:HY04AAS1_0955"/>
<dbReference type="eggNOG" id="COG1825">
    <property type="taxonomic scope" value="Bacteria"/>
</dbReference>
<dbReference type="HOGENOM" id="CLU_075939_2_1_0"/>
<dbReference type="OrthoDB" id="9790002at2"/>
<dbReference type="GO" id="GO:0022625">
    <property type="term" value="C:cytosolic large ribosomal subunit"/>
    <property type="evidence" value="ECO:0007669"/>
    <property type="project" value="TreeGrafter"/>
</dbReference>
<dbReference type="GO" id="GO:0008097">
    <property type="term" value="F:5S rRNA binding"/>
    <property type="evidence" value="ECO:0007669"/>
    <property type="project" value="InterPro"/>
</dbReference>
<dbReference type="GO" id="GO:0003735">
    <property type="term" value="F:structural constituent of ribosome"/>
    <property type="evidence" value="ECO:0007669"/>
    <property type="project" value="InterPro"/>
</dbReference>
<dbReference type="GO" id="GO:0006412">
    <property type="term" value="P:translation"/>
    <property type="evidence" value="ECO:0007669"/>
    <property type="project" value="UniProtKB-UniRule"/>
</dbReference>
<dbReference type="CDD" id="cd00495">
    <property type="entry name" value="Ribosomal_L25_TL5_CTC"/>
    <property type="match status" value="1"/>
</dbReference>
<dbReference type="Gene3D" id="2.170.120.20">
    <property type="entry name" value="Ribosomal protein L25, beta domain"/>
    <property type="match status" value="1"/>
</dbReference>
<dbReference type="Gene3D" id="2.40.240.10">
    <property type="entry name" value="Ribosomal Protein L25, Chain P"/>
    <property type="match status" value="1"/>
</dbReference>
<dbReference type="HAMAP" id="MF_01334">
    <property type="entry name" value="Ribosomal_bL25_CTC"/>
    <property type="match status" value="1"/>
</dbReference>
<dbReference type="InterPro" id="IPR020056">
    <property type="entry name" value="Rbsml_bL25/Gln-tRNA_synth_N"/>
</dbReference>
<dbReference type="InterPro" id="IPR011035">
    <property type="entry name" value="Ribosomal_bL25/Gln-tRNA_synth"/>
</dbReference>
<dbReference type="InterPro" id="IPR020057">
    <property type="entry name" value="Ribosomal_bL25_b-dom"/>
</dbReference>
<dbReference type="InterPro" id="IPR037121">
    <property type="entry name" value="Ribosomal_bL25_C"/>
</dbReference>
<dbReference type="InterPro" id="IPR001021">
    <property type="entry name" value="Ribosomal_bL25_long"/>
</dbReference>
<dbReference type="InterPro" id="IPR029751">
    <property type="entry name" value="Ribosomal_L25_dom"/>
</dbReference>
<dbReference type="InterPro" id="IPR020930">
    <property type="entry name" value="Ribosomal_uL5_bac-type"/>
</dbReference>
<dbReference type="NCBIfam" id="TIGR00731">
    <property type="entry name" value="bL25_bact_ctc"/>
    <property type="match status" value="1"/>
</dbReference>
<dbReference type="NCBIfam" id="NF004140">
    <property type="entry name" value="PRK05618.4-3"/>
    <property type="match status" value="1"/>
</dbReference>
<dbReference type="PANTHER" id="PTHR33284">
    <property type="entry name" value="RIBOSOMAL PROTEIN L25/GLN-TRNA SYNTHETASE, ANTI-CODON-BINDING DOMAIN-CONTAINING PROTEIN"/>
    <property type="match status" value="1"/>
</dbReference>
<dbReference type="PANTHER" id="PTHR33284:SF1">
    <property type="entry name" value="RIBOSOMAL PROTEIN L25_GLN-TRNA SYNTHETASE, ANTI-CODON-BINDING DOMAIN-CONTAINING PROTEIN"/>
    <property type="match status" value="1"/>
</dbReference>
<dbReference type="Pfam" id="PF01386">
    <property type="entry name" value="Ribosomal_L25p"/>
    <property type="match status" value="1"/>
</dbReference>
<dbReference type="Pfam" id="PF14693">
    <property type="entry name" value="Ribosomal_TL5_C"/>
    <property type="match status" value="1"/>
</dbReference>
<dbReference type="SUPFAM" id="SSF50715">
    <property type="entry name" value="Ribosomal protein L25-like"/>
    <property type="match status" value="1"/>
</dbReference>
<comment type="function">
    <text evidence="1">This is one of the proteins that binds to the 5S RNA in the ribosome where it forms part of the central protuberance.</text>
</comment>
<comment type="subunit">
    <text evidence="1">Part of the 50S ribosomal subunit; part of the 5S rRNA/L5/L18/L25 subcomplex. Contacts the 5S rRNA. Binds to the 5S rRNA independently of L5 and L18.</text>
</comment>
<comment type="similarity">
    <text evidence="1">Belongs to the bacterial ribosomal protein bL25 family. CTC subfamily.</text>
</comment>
<name>RL25_HYDS0</name>
<sequence length="197" mass="21824">MKRVSIELLEREASTKGDKKSKRKEGLVPVEIYGKGVQNIHAYMRIKDLAAMPHGTTFLIEAKLGNEVLPCLLKDIQYGWLGDNPVHVDLYNISNVTETDVEVPLEFVGTPKGVELGGTLEIHLHSIELKVDPRNIPEKITVDISNVDLGGVLHVKDLNIPANCRLMEDPEEVVLVVAEPEETKEGEEEQAQEAATK</sequence>
<feature type="chain" id="PRO_1000142528" description="Large ribosomal subunit protein bL25">
    <location>
        <begin position="1"/>
        <end position="197"/>
    </location>
</feature>
<evidence type="ECO:0000255" key="1">
    <source>
        <dbReference type="HAMAP-Rule" id="MF_01334"/>
    </source>
</evidence>
<evidence type="ECO:0000305" key="2"/>
<keyword id="KW-0687">Ribonucleoprotein</keyword>
<keyword id="KW-0689">Ribosomal protein</keyword>
<keyword id="KW-0694">RNA-binding</keyword>
<keyword id="KW-0699">rRNA-binding</keyword>